<evidence type="ECO:0000250" key="1">
    <source>
        <dbReference type="UniProtKB" id="Q99VE8"/>
    </source>
</evidence>
<evidence type="ECO:0000305" key="2"/>
<proteinExistence type="inferred from homology"/>
<organism>
    <name type="scientific">Staphylococcus aureus (strain USA300)</name>
    <dbReference type="NCBI Taxonomy" id="367830"/>
    <lineage>
        <taxon>Bacteria</taxon>
        <taxon>Bacillati</taxon>
        <taxon>Bacillota</taxon>
        <taxon>Bacilli</taxon>
        <taxon>Bacillales</taxon>
        <taxon>Staphylococcaceae</taxon>
        <taxon>Staphylococcus</taxon>
    </lineage>
</organism>
<protein>
    <recommendedName>
        <fullName evidence="1">Acid sugar phosphatase</fullName>
        <ecNumber evidence="1">3.1.3.-</ecNumber>
    </recommendedName>
</protein>
<accession>Q2FIE5</accession>
<feature type="chain" id="PRO_0000271488" description="Acid sugar phosphatase">
    <location>
        <begin position="1"/>
        <end position="259"/>
    </location>
</feature>
<comment type="function">
    <text evidence="1">Catalyzes the dephosphorylation of 2-6 carbon acid sugars in vitro.</text>
</comment>
<comment type="cofactor">
    <cofactor evidence="1">
        <name>Mg(2+)</name>
        <dbReference type="ChEBI" id="CHEBI:18420"/>
    </cofactor>
</comment>
<comment type="similarity">
    <text evidence="2">Belongs to the HAD-like hydrolase superfamily. NagD family.</text>
</comment>
<reference key="1">
    <citation type="journal article" date="2006" name="Lancet">
        <title>Complete genome sequence of USA300, an epidemic clone of community-acquired meticillin-resistant Staphylococcus aureus.</title>
        <authorList>
            <person name="Diep B.A."/>
            <person name="Gill S.R."/>
            <person name="Chang R.F."/>
            <person name="Phan T.H."/>
            <person name="Chen J.H."/>
            <person name="Davidson M.G."/>
            <person name="Lin F."/>
            <person name="Lin J."/>
            <person name="Carleton H.A."/>
            <person name="Mongodin E.F."/>
            <person name="Sensabaugh G.F."/>
            <person name="Perdreau-Remington F."/>
        </authorList>
    </citation>
    <scope>NUCLEOTIDE SEQUENCE [LARGE SCALE GENOMIC DNA]</scope>
    <source>
        <strain>USA300</strain>
    </source>
</reference>
<keyword id="KW-0378">Hydrolase</keyword>
<keyword id="KW-0460">Magnesium</keyword>
<keyword id="KW-0479">Metal-binding</keyword>
<gene>
    <name type="primary">nagD</name>
    <name type="ordered locus">SAUSA300_0833</name>
</gene>
<name>NAGD_STAA3</name>
<dbReference type="EC" id="3.1.3.-" evidence="1"/>
<dbReference type="EMBL" id="CP000255">
    <property type="protein sequence ID" value="ABD20857.1"/>
    <property type="molecule type" value="Genomic_DNA"/>
</dbReference>
<dbReference type="RefSeq" id="WP_000816184.1">
    <property type="nucleotide sequence ID" value="NZ_CP027476.1"/>
</dbReference>
<dbReference type="SMR" id="Q2FIE5"/>
<dbReference type="KEGG" id="saa:SAUSA300_0833"/>
<dbReference type="HOGENOM" id="CLU_043473_1_1_9"/>
<dbReference type="OMA" id="PPMHRET"/>
<dbReference type="Proteomes" id="UP000001939">
    <property type="component" value="Chromosome"/>
</dbReference>
<dbReference type="GO" id="GO:0005737">
    <property type="term" value="C:cytoplasm"/>
    <property type="evidence" value="ECO:0007669"/>
    <property type="project" value="TreeGrafter"/>
</dbReference>
<dbReference type="GO" id="GO:0046872">
    <property type="term" value="F:metal ion binding"/>
    <property type="evidence" value="ECO:0007669"/>
    <property type="project" value="UniProtKB-KW"/>
</dbReference>
<dbReference type="GO" id="GO:0016791">
    <property type="term" value="F:phosphatase activity"/>
    <property type="evidence" value="ECO:0007669"/>
    <property type="project" value="TreeGrafter"/>
</dbReference>
<dbReference type="CDD" id="cd07530">
    <property type="entry name" value="HAD_Pase_UmpH-like"/>
    <property type="match status" value="1"/>
</dbReference>
<dbReference type="FunFam" id="3.40.50.1000:FF:000053">
    <property type="entry name" value="TIGR01457 family HAD hydrolase"/>
    <property type="match status" value="1"/>
</dbReference>
<dbReference type="Gene3D" id="3.40.50.1000">
    <property type="entry name" value="HAD superfamily/HAD-like"/>
    <property type="match status" value="2"/>
</dbReference>
<dbReference type="InterPro" id="IPR036412">
    <property type="entry name" value="HAD-like_sf"/>
</dbReference>
<dbReference type="InterPro" id="IPR006357">
    <property type="entry name" value="HAD-SF_hydro_IIA"/>
</dbReference>
<dbReference type="InterPro" id="IPR006354">
    <property type="entry name" value="HAD-SF_hydro_IIA_hyp1"/>
</dbReference>
<dbReference type="InterPro" id="IPR023214">
    <property type="entry name" value="HAD_sf"/>
</dbReference>
<dbReference type="NCBIfam" id="TIGR01460">
    <property type="entry name" value="HAD-SF-IIA"/>
    <property type="match status" value="1"/>
</dbReference>
<dbReference type="NCBIfam" id="TIGR01457">
    <property type="entry name" value="HAD-SF-IIA-hyp2"/>
    <property type="match status" value="1"/>
</dbReference>
<dbReference type="PANTHER" id="PTHR19288">
    <property type="entry name" value="4-NITROPHENYLPHOSPHATASE-RELATED"/>
    <property type="match status" value="1"/>
</dbReference>
<dbReference type="PANTHER" id="PTHR19288:SF46">
    <property type="entry name" value="HALOACID DEHALOGENASE-LIKE HYDROLASE DOMAIN-CONTAINING PROTEIN 2"/>
    <property type="match status" value="1"/>
</dbReference>
<dbReference type="Pfam" id="PF13344">
    <property type="entry name" value="Hydrolase_6"/>
    <property type="match status" value="1"/>
</dbReference>
<dbReference type="Pfam" id="PF13242">
    <property type="entry name" value="Hydrolase_like"/>
    <property type="match status" value="1"/>
</dbReference>
<dbReference type="PIRSF" id="PIRSF000915">
    <property type="entry name" value="PGP-type_phosphatase"/>
    <property type="match status" value="1"/>
</dbReference>
<dbReference type="SFLD" id="SFLDG01139">
    <property type="entry name" value="C2.A:_Pyridoxal_Phosphate_Phos"/>
    <property type="match status" value="1"/>
</dbReference>
<dbReference type="SFLD" id="SFLDS00003">
    <property type="entry name" value="Haloacid_Dehalogenase"/>
    <property type="match status" value="1"/>
</dbReference>
<dbReference type="SUPFAM" id="SSF56784">
    <property type="entry name" value="HAD-like"/>
    <property type="match status" value="1"/>
</dbReference>
<sequence length="259" mass="27946">MKQYKAYLIDLDGTMYMGTDEIDGAKQFIDYLNVKGIPHLYVTNNSTKTPEQVTEKLREMHIDAKPEEVVTSALATADYISEQSPGASVYMLGGSGLNTALTEAGLVIKNDEHVDYVVIGLDEQVTYEKLAIATLGVRNGATFISTNPDVSIPKERGLLPGNGAITSVVSVSTGVSPQFIGKPEPIIMVKALEILGLDKSEVAMVGDLYDTDIMSGINVGMDTIHVQTGVSTLEDVQNKNVPPTYSFKDLNEAIAELEK</sequence>